<accession>Q6D5W6</accession>
<feature type="chain" id="PRO_0000164185" description="Multidrug resistance protein MdtK">
    <location>
        <begin position="1"/>
        <end position="457"/>
    </location>
</feature>
<feature type="transmembrane region" description="Helical" evidence="1">
    <location>
        <begin position="11"/>
        <end position="31"/>
    </location>
</feature>
<feature type="transmembrane region" description="Helical" evidence="1">
    <location>
        <begin position="53"/>
        <end position="73"/>
    </location>
</feature>
<feature type="transmembrane region" description="Helical" evidence="1">
    <location>
        <begin position="93"/>
        <end position="113"/>
    </location>
</feature>
<feature type="transmembrane region" description="Helical" evidence="1">
    <location>
        <begin position="127"/>
        <end position="147"/>
    </location>
</feature>
<feature type="transmembrane region" description="Helical" evidence="1">
    <location>
        <begin position="159"/>
        <end position="179"/>
    </location>
</feature>
<feature type="transmembrane region" description="Helical" evidence="1">
    <location>
        <begin position="190"/>
        <end position="210"/>
    </location>
</feature>
<feature type="transmembrane region" description="Helical" evidence="1">
    <location>
        <begin position="249"/>
        <end position="269"/>
    </location>
</feature>
<feature type="transmembrane region" description="Helical" evidence="1">
    <location>
        <begin position="276"/>
        <end position="296"/>
    </location>
</feature>
<feature type="transmembrane region" description="Helical" evidence="1">
    <location>
        <begin position="313"/>
        <end position="333"/>
    </location>
</feature>
<feature type="transmembrane region" description="Helical" evidence="1">
    <location>
        <begin position="357"/>
        <end position="377"/>
    </location>
</feature>
<feature type="transmembrane region" description="Helical" evidence="1">
    <location>
        <begin position="387"/>
        <end position="407"/>
    </location>
</feature>
<feature type="transmembrane region" description="Helical" evidence="1">
    <location>
        <begin position="417"/>
        <end position="437"/>
    </location>
</feature>
<name>MDTK_PECAS</name>
<reference key="1">
    <citation type="journal article" date="2004" name="Proc. Natl. Acad. Sci. U.S.A.">
        <title>Genome sequence of the enterobacterial phytopathogen Erwinia carotovora subsp. atroseptica and characterization of virulence factors.</title>
        <authorList>
            <person name="Bell K.S."/>
            <person name="Sebaihia M."/>
            <person name="Pritchard L."/>
            <person name="Holden M.T.G."/>
            <person name="Hyman L.J."/>
            <person name="Holeva M.C."/>
            <person name="Thomson N.R."/>
            <person name="Bentley S.D."/>
            <person name="Churcher L.J.C."/>
            <person name="Mungall K."/>
            <person name="Atkin R."/>
            <person name="Bason N."/>
            <person name="Brooks K."/>
            <person name="Chillingworth T."/>
            <person name="Clark K."/>
            <person name="Doggett J."/>
            <person name="Fraser A."/>
            <person name="Hance Z."/>
            <person name="Hauser H."/>
            <person name="Jagels K."/>
            <person name="Moule S."/>
            <person name="Norbertczak H."/>
            <person name="Ormond D."/>
            <person name="Price C."/>
            <person name="Quail M.A."/>
            <person name="Sanders M."/>
            <person name="Walker D."/>
            <person name="Whitehead S."/>
            <person name="Salmond G.P.C."/>
            <person name="Birch P.R.J."/>
            <person name="Parkhill J."/>
            <person name="Toth I.K."/>
        </authorList>
    </citation>
    <scope>NUCLEOTIDE SEQUENCE [LARGE SCALE GENOMIC DNA]</scope>
    <source>
        <strain>SCRI 1043 / ATCC BAA-672</strain>
    </source>
</reference>
<comment type="function">
    <text evidence="1">Multidrug efflux pump that functions probably as a Na(+)/drug antiporter.</text>
</comment>
<comment type="subcellular location">
    <subcellularLocation>
        <location evidence="1">Cell inner membrane</location>
        <topology evidence="1">Multi-pass membrane protein</topology>
    </subcellularLocation>
</comment>
<comment type="similarity">
    <text evidence="1">Belongs to the multi antimicrobial extrusion (MATE) (TC 2.A.66.1) family. MdtK subfamily.</text>
</comment>
<protein>
    <recommendedName>
        <fullName evidence="1">Multidrug resistance protein MdtK</fullName>
    </recommendedName>
    <alternativeName>
        <fullName evidence="1">Multidrug-efflux transporter</fullName>
    </alternativeName>
</protein>
<keyword id="KW-0050">Antiport</keyword>
<keyword id="KW-0997">Cell inner membrane</keyword>
<keyword id="KW-1003">Cell membrane</keyword>
<keyword id="KW-0406">Ion transport</keyword>
<keyword id="KW-0472">Membrane</keyword>
<keyword id="KW-1185">Reference proteome</keyword>
<keyword id="KW-0915">Sodium</keyword>
<keyword id="KW-0739">Sodium transport</keyword>
<keyword id="KW-0812">Transmembrane</keyword>
<keyword id="KW-1133">Transmembrane helix</keyword>
<keyword id="KW-0813">Transport</keyword>
<gene>
    <name evidence="1" type="primary">mdtK</name>
    <name type="synonym">norM</name>
    <name type="ordered locus">ECA1922</name>
</gene>
<proteinExistence type="inferred from homology"/>
<organism>
    <name type="scientific">Pectobacterium atrosepticum (strain SCRI 1043 / ATCC BAA-672)</name>
    <name type="common">Erwinia carotovora subsp. atroseptica</name>
    <dbReference type="NCBI Taxonomy" id="218491"/>
    <lineage>
        <taxon>Bacteria</taxon>
        <taxon>Pseudomonadati</taxon>
        <taxon>Pseudomonadota</taxon>
        <taxon>Gammaproteobacteria</taxon>
        <taxon>Enterobacterales</taxon>
        <taxon>Pectobacteriaceae</taxon>
        <taxon>Pectobacterium</taxon>
    </lineage>
</organism>
<sequence length="457" mass="49456">MQQYLTEARKLSALAVPVIIAQVSQTSMGVVDTIMAGAYSATDMAAVAVGTSIWLPAILFGHGLLLALTPVVAQLNGSGRRDRISHQVRQSFFLAAIISVLTMLVLYQGEYAINLMSNDSPELAAKAIGYLHALLWGVPGYLFYQVLRCQCEGLSKTYPGMMIGFIGLLINIPINYIFIHGKFGMPELGGVGCGVATASVYWIMMLLMMLYTQRASWLRDIRLHRPAFRPDFTVLKRLFGLGLPIALALLFEVTLFAVVALLVLPLGVVNVAGHQIALNFSSLMFVLPLSVGVATTIRVGHRLGEGSVDNARIAAHTGIMAGVALACCTAIFTTLLREPIALLYNQDPLVVAMASQLMLLAAVYQISDAVQVIGTGVLRGYKDTRSIFYITFVAYWVLGLPSGYLLALTDVIVPRMGPAGFWCGFIIGLTAAAVMMVTRIRFLQRQPAARILARAAR</sequence>
<evidence type="ECO:0000255" key="1">
    <source>
        <dbReference type="HAMAP-Rule" id="MF_00400"/>
    </source>
</evidence>
<dbReference type="EMBL" id="BX950851">
    <property type="protein sequence ID" value="CAG74825.1"/>
    <property type="molecule type" value="Genomic_DNA"/>
</dbReference>
<dbReference type="RefSeq" id="WP_011093490.1">
    <property type="nucleotide sequence ID" value="NC_004547.2"/>
</dbReference>
<dbReference type="SMR" id="Q6D5W6"/>
<dbReference type="STRING" id="218491.ECA1922"/>
<dbReference type="KEGG" id="eca:ECA1922"/>
<dbReference type="PATRIC" id="fig|218491.5.peg.1954"/>
<dbReference type="eggNOG" id="COG0534">
    <property type="taxonomic scope" value="Bacteria"/>
</dbReference>
<dbReference type="HOGENOM" id="CLU_012893_6_0_6"/>
<dbReference type="OrthoDB" id="9780160at2"/>
<dbReference type="Proteomes" id="UP000007966">
    <property type="component" value="Chromosome"/>
</dbReference>
<dbReference type="GO" id="GO:0005886">
    <property type="term" value="C:plasma membrane"/>
    <property type="evidence" value="ECO:0007669"/>
    <property type="project" value="UniProtKB-SubCell"/>
</dbReference>
<dbReference type="GO" id="GO:0015297">
    <property type="term" value="F:antiporter activity"/>
    <property type="evidence" value="ECO:0007669"/>
    <property type="project" value="UniProtKB-UniRule"/>
</dbReference>
<dbReference type="GO" id="GO:0042910">
    <property type="term" value="F:xenobiotic transmembrane transporter activity"/>
    <property type="evidence" value="ECO:0007669"/>
    <property type="project" value="UniProtKB-UniRule"/>
</dbReference>
<dbReference type="GO" id="GO:0006814">
    <property type="term" value="P:sodium ion transport"/>
    <property type="evidence" value="ECO:0007669"/>
    <property type="project" value="UniProtKB-UniRule"/>
</dbReference>
<dbReference type="GO" id="GO:0006855">
    <property type="term" value="P:xenobiotic transmembrane transport"/>
    <property type="evidence" value="ECO:0007669"/>
    <property type="project" value="UniProtKB-UniRule"/>
</dbReference>
<dbReference type="CDD" id="cd13131">
    <property type="entry name" value="MATE_NorM_like"/>
    <property type="match status" value="1"/>
</dbReference>
<dbReference type="HAMAP" id="MF_00400">
    <property type="entry name" value="MdtK"/>
    <property type="match status" value="1"/>
</dbReference>
<dbReference type="InterPro" id="IPR002528">
    <property type="entry name" value="MATE_fam"/>
</dbReference>
<dbReference type="InterPro" id="IPR050222">
    <property type="entry name" value="MATE_MdtK"/>
</dbReference>
<dbReference type="InterPro" id="IPR048279">
    <property type="entry name" value="MdtK-like"/>
</dbReference>
<dbReference type="InterPro" id="IPR022913">
    <property type="entry name" value="Multidrug-R_MdtK"/>
</dbReference>
<dbReference type="NCBIfam" id="TIGR00797">
    <property type="entry name" value="matE"/>
    <property type="match status" value="1"/>
</dbReference>
<dbReference type="PANTHER" id="PTHR43298:SF2">
    <property type="entry name" value="FMN_FAD EXPORTER YEEO-RELATED"/>
    <property type="match status" value="1"/>
</dbReference>
<dbReference type="PANTHER" id="PTHR43298">
    <property type="entry name" value="MULTIDRUG RESISTANCE PROTEIN NORM-RELATED"/>
    <property type="match status" value="1"/>
</dbReference>
<dbReference type="Pfam" id="PF01554">
    <property type="entry name" value="MatE"/>
    <property type="match status" value="2"/>
</dbReference>
<dbReference type="PIRSF" id="PIRSF006603">
    <property type="entry name" value="DinF"/>
    <property type="match status" value="1"/>
</dbReference>